<comment type="catalytic activity">
    <reaction evidence="1">
        <text>1-(5-phospho-beta-D-ribosyl)-5-[(5-phospho-beta-D-ribosylamino)methylideneamino]imidazole-4-carboxamide = 5-[(5-phospho-1-deoxy-D-ribulos-1-ylimino)methylamino]-1-(5-phospho-beta-D-ribosyl)imidazole-4-carboxamide</text>
        <dbReference type="Rhea" id="RHEA:15469"/>
        <dbReference type="ChEBI" id="CHEBI:58435"/>
        <dbReference type="ChEBI" id="CHEBI:58525"/>
        <dbReference type="EC" id="5.3.1.16"/>
    </reaction>
</comment>
<comment type="pathway">
    <text evidence="1">Amino-acid biosynthesis; L-histidine biosynthesis; L-histidine from 5-phospho-alpha-D-ribose 1-diphosphate: step 4/9.</text>
</comment>
<comment type="subcellular location">
    <subcellularLocation>
        <location evidence="1">Cytoplasm</location>
    </subcellularLocation>
</comment>
<comment type="similarity">
    <text evidence="1">Belongs to the HisA/HisF family.</text>
</comment>
<evidence type="ECO:0000255" key="1">
    <source>
        <dbReference type="HAMAP-Rule" id="MF_01014"/>
    </source>
</evidence>
<name>HIS4_STAAB</name>
<dbReference type="EC" id="5.3.1.16" evidence="1"/>
<dbReference type="EMBL" id="AJ938182">
    <property type="protein sequence ID" value="CAI82238.1"/>
    <property type="molecule type" value="Genomic_DNA"/>
</dbReference>
<dbReference type="RefSeq" id="WP_000571732.1">
    <property type="nucleotide sequence ID" value="NC_007622.1"/>
</dbReference>
<dbReference type="SMR" id="Q2YZ70"/>
<dbReference type="KEGG" id="sab:SAB2550c"/>
<dbReference type="HOGENOM" id="CLU_048577_1_2_9"/>
<dbReference type="UniPathway" id="UPA00031">
    <property type="reaction ID" value="UER00009"/>
</dbReference>
<dbReference type="GO" id="GO:0005737">
    <property type="term" value="C:cytoplasm"/>
    <property type="evidence" value="ECO:0007669"/>
    <property type="project" value="UniProtKB-SubCell"/>
</dbReference>
<dbReference type="GO" id="GO:0003949">
    <property type="term" value="F:1-(5-phosphoribosyl)-5-[(5-phosphoribosylamino)methylideneamino]imidazole-4-carboxamide isomerase activity"/>
    <property type="evidence" value="ECO:0007669"/>
    <property type="project" value="UniProtKB-UniRule"/>
</dbReference>
<dbReference type="GO" id="GO:0000105">
    <property type="term" value="P:L-histidine biosynthetic process"/>
    <property type="evidence" value="ECO:0007669"/>
    <property type="project" value="UniProtKB-UniRule"/>
</dbReference>
<dbReference type="GO" id="GO:0000162">
    <property type="term" value="P:L-tryptophan biosynthetic process"/>
    <property type="evidence" value="ECO:0007669"/>
    <property type="project" value="TreeGrafter"/>
</dbReference>
<dbReference type="CDD" id="cd04732">
    <property type="entry name" value="HisA"/>
    <property type="match status" value="1"/>
</dbReference>
<dbReference type="Gene3D" id="3.20.20.70">
    <property type="entry name" value="Aldolase class I"/>
    <property type="match status" value="1"/>
</dbReference>
<dbReference type="HAMAP" id="MF_01014">
    <property type="entry name" value="HisA"/>
    <property type="match status" value="1"/>
</dbReference>
<dbReference type="InterPro" id="IPR013785">
    <property type="entry name" value="Aldolase_TIM"/>
</dbReference>
<dbReference type="InterPro" id="IPR006062">
    <property type="entry name" value="His_biosynth"/>
</dbReference>
<dbReference type="InterPro" id="IPR006063">
    <property type="entry name" value="HisA_bact_arch"/>
</dbReference>
<dbReference type="InterPro" id="IPR044524">
    <property type="entry name" value="Isoase_HisA-like"/>
</dbReference>
<dbReference type="InterPro" id="IPR023016">
    <property type="entry name" value="Isoase_HisA-like_bact"/>
</dbReference>
<dbReference type="InterPro" id="IPR011060">
    <property type="entry name" value="RibuloseP-bd_barrel"/>
</dbReference>
<dbReference type="NCBIfam" id="TIGR00007">
    <property type="entry name" value="1-(5-phosphoribosyl)-5-[(5-phosphoribosylamino)methylideneamino]imidazole-4-carboxamide isomerase"/>
    <property type="match status" value="1"/>
</dbReference>
<dbReference type="NCBIfam" id="NF010114">
    <property type="entry name" value="PRK13587.1"/>
    <property type="match status" value="1"/>
</dbReference>
<dbReference type="PANTHER" id="PTHR43090">
    <property type="entry name" value="1-(5-PHOSPHORIBOSYL)-5-[(5-PHOSPHORIBOSYLAMINO)METHYLIDENEAMINO] IMIDAZOLE-4-CARBOXAMIDE ISOMERASE"/>
    <property type="match status" value="1"/>
</dbReference>
<dbReference type="PANTHER" id="PTHR43090:SF2">
    <property type="entry name" value="1-(5-PHOSPHORIBOSYL)-5-[(5-PHOSPHORIBOSYLAMINO)METHYLIDENEAMINO] IMIDAZOLE-4-CARBOXAMIDE ISOMERASE"/>
    <property type="match status" value="1"/>
</dbReference>
<dbReference type="Pfam" id="PF00977">
    <property type="entry name" value="His_biosynth"/>
    <property type="match status" value="1"/>
</dbReference>
<dbReference type="SUPFAM" id="SSF51366">
    <property type="entry name" value="Ribulose-phoshate binding barrel"/>
    <property type="match status" value="1"/>
</dbReference>
<keyword id="KW-0028">Amino-acid biosynthesis</keyword>
<keyword id="KW-0963">Cytoplasm</keyword>
<keyword id="KW-0368">Histidine biosynthesis</keyword>
<keyword id="KW-0413">Isomerase</keyword>
<organism>
    <name type="scientific">Staphylococcus aureus (strain bovine RF122 / ET3-1)</name>
    <dbReference type="NCBI Taxonomy" id="273036"/>
    <lineage>
        <taxon>Bacteria</taxon>
        <taxon>Bacillati</taxon>
        <taxon>Bacillota</taxon>
        <taxon>Bacilli</taxon>
        <taxon>Bacillales</taxon>
        <taxon>Staphylococcaceae</taxon>
        <taxon>Staphylococcus</taxon>
    </lineage>
</organism>
<feature type="chain" id="PRO_0000229086" description="1-(5-phosphoribosyl)-5-[(5-phosphoribosylamino)methylideneamino] imidazole-4-carboxamide isomerase">
    <location>
        <begin position="1"/>
        <end position="234"/>
    </location>
</feature>
<feature type="active site" description="Proton acceptor" evidence="1">
    <location>
        <position position="9"/>
    </location>
</feature>
<feature type="active site" description="Proton donor" evidence="1">
    <location>
        <position position="131"/>
    </location>
</feature>
<proteinExistence type="inferred from homology"/>
<gene>
    <name evidence="1" type="primary">hisA</name>
    <name type="ordered locus">SAB2550c</name>
</gene>
<reference key="1">
    <citation type="journal article" date="2007" name="PLoS ONE">
        <title>Molecular correlates of host specialization in Staphylococcus aureus.</title>
        <authorList>
            <person name="Herron-Olson L."/>
            <person name="Fitzgerald J.R."/>
            <person name="Musser J.M."/>
            <person name="Kapur V."/>
        </authorList>
    </citation>
    <scope>NUCLEOTIDE SEQUENCE [LARGE SCALE GENOMIC DNA]</scope>
    <source>
        <strain>bovine RF122 / ET3-1</strain>
    </source>
</reference>
<sequence>MIELWPAIDLIGSTSVRLTEGKYDSEEKMSRSAEESIAYYSQFECVNRIHIVDLIGAKAQHAREFDYIKSLRRLTTKDIEVGGGIRTKSQIMDYFAAGINYCIVGTKGIQDTDWLKEMAHTFPGRIYFSVDAYGEDIKVNGWEEDTELNLFSFVKQLSDIPLGGIIYTHIAKDGKMSGPNFELTGQLVKATTIPVIASGGIRHQQDIQRLASLNVHAAIIGKAAHQASFWEGLK</sequence>
<protein>
    <recommendedName>
        <fullName evidence="1">1-(5-phosphoribosyl)-5-[(5-phosphoribosylamino)methylideneamino] imidazole-4-carboxamide isomerase</fullName>
        <ecNumber evidence="1">5.3.1.16</ecNumber>
    </recommendedName>
    <alternativeName>
        <fullName evidence="1">Phosphoribosylformimino-5-aminoimidazole carboxamide ribotide isomerase</fullName>
    </alternativeName>
</protein>
<accession>Q2YZ70</accession>